<evidence type="ECO:0000250" key="1">
    <source>
        <dbReference type="UniProtKB" id="P02563"/>
    </source>
</evidence>
<evidence type="ECO:0000250" key="2">
    <source>
        <dbReference type="UniProtKB" id="P02564"/>
    </source>
</evidence>
<evidence type="ECO:0000250" key="3">
    <source>
        <dbReference type="UniProtKB" id="P12883"/>
    </source>
</evidence>
<evidence type="ECO:0000250" key="4">
    <source>
        <dbReference type="UniProtKB" id="Q02566"/>
    </source>
</evidence>
<evidence type="ECO:0000255" key="5"/>
<evidence type="ECO:0000255" key="6">
    <source>
        <dbReference type="PROSITE-ProRule" id="PRU00116"/>
    </source>
</evidence>
<evidence type="ECO:0000255" key="7">
    <source>
        <dbReference type="PROSITE-ProRule" id="PRU00782"/>
    </source>
</evidence>
<evidence type="ECO:0000255" key="8">
    <source>
        <dbReference type="PROSITE-ProRule" id="PRU01190"/>
    </source>
</evidence>
<evidence type="ECO:0000256" key="9">
    <source>
        <dbReference type="SAM" id="MobiDB-lite"/>
    </source>
</evidence>
<evidence type="ECO:0000305" key="10"/>
<reference key="1">
    <citation type="journal article" date="1994" name="J. Mol. Cell. Cardiol.">
        <title>Characterization and nucleotide sequence of the cardiac alpha-myosin heavy chain gene from Syrian hamster.</title>
        <authorList>
            <person name="Wang R."/>
            <person name="Sole M.J."/>
            <person name="Cukerman E."/>
            <person name="Liew C.-C."/>
        </authorList>
    </citation>
    <scope>NUCLEOTIDE SEQUENCE [GENOMIC DNA]</scope>
    <source>
        <strain>F1B</strain>
        <tissue>Liver</tissue>
    </source>
</reference>
<reference key="2">
    <citation type="journal article" date="1988" name="Nucleic Acids Res.">
        <title>Sequence of cDNA encoding the Syrian hamster cardiac beta-myosin heavy chain.</title>
        <authorList>
            <person name="Jandreski M.A."/>
            <person name="Sole M.J."/>
            <person name="Liew C.-C."/>
        </authorList>
    </citation>
    <scope>NUCLEOTIDE SEQUENCE [MRNA] OF 961-1934</scope>
</reference>
<keyword id="KW-0009">Actin-binding</keyword>
<keyword id="KW-0067">ATP-binding</keyword>
<keyword id="KW-0112">Calmodulin-binding</keyword>
<keyword id="KW-0175">Coiled coil</keyword>
<keyword id="KW-0963">Cytoplasm</keyword>
<keyword id="KW-0488">Methylation</keyword>
<keyword id="KW-0505">Motor protein</keyword>
<keyword id="KW-0514">Muscle protein</keyword>
<keyword id="KW-0518">Myosin</keyword>
<keyword id="KW-0547">Nucleotide-binding</keyword>
<keyword id="KW-0597">Phosphoprotein</keyword>
<keyword id="KW-1185">Reference proteome</keyword>
<keyword id="KW-0787">Thick filament</keyword>
<comment type="function">
    <text evidence="3">Myosins are actin-based motor molecules with ATPase activity essential for muscle contraction. Forms regular bipolar thick filaments that, together with actin thin filaments, constitute the fundamental contractile unit of skeletal and cardiac muscle.</text>
</comment>
<comment type="subunit">
    <text evidence="3">Muscle myosin is a hexameric protein that consists of 2 heavy chain subunits (MHC), 2 alkali light chain subunits (MLC) and 2 regulatory light chain subunits (MLC-2). Interacts with ECPAS. Interacts (via C-terminus) with LRRC39.</text>
</comment>
<comment type="subcellular location">
    <subcellularLocation>
        <location evidence="2">Cytoplasm</location>
        <location evidence="2">Myofibril</location>
    </subcellularLocation>
    <subcellularLocation>
        <location evidence="2">Cytoplasm</location>
        <location evidence="2">Myofibril</location>
        <location evidence="2">Sarcomere</location>
    </subcellularLocation>
    <text evidence="2">Thick filaments of the myofibrils.</text>
</comment>
<comment type="domain">
    <text evidence="10">Limited proteolysis of myosin heavy chain produces 1 light meromyosin (LMM) and 1 heavy meromyosin (HMM). HMM can be further cleaved into 2 globular subfragments (S1) and 1 rod-shaped subfragment (S2).</text>
</comment>
<comment type="domain">
    <text evidence="3">The rodlike tail sequence is highly repetitive, showing cycles of a 28-residue repeat pattern composed of 4 heptapeptides, characteristic for alpha-helical coiled coils. Four skip residues (Skip1: Thr-1187, Skip2: Glu-1384, Skip3: Glu-1581 and Skip4: Gly-1806) introduce discontinuities in the coiled-coil heptad repeats. The first three skip residues are structurally comparable and induce a unique local relaxation of the coiled-coil superhelical pitch and the fourth skip residue lies within a highly flexible molecular hinge that is necessary for myosin incorporation in the bare zone of sarcomeres.</text>
</comment>
<comment type="miscellaneous">
    <text>The cardiac alpha isoform is a 'fast' ATPase myosin, while the beta isoform is a 'slow' ATPase.</text>
</comment>
<comment type="similarity">
    <text evidence="10">Belongs to the TRAFAC class myosin-kinesin ATPase superfamily. Myosin family.</text>
</comment>
<comment type="caution">
    <text evidence="10">Represents a conventional myosin. This protein should not be confused with the unconventional myosin-7 (MYO7).</text>
</comment>
<name>MYH7_MESAU</name>
<organism>
    <name type="scientific">Mesocricetus auratus</name>
    <name type="common">Golden hamster</name>
    <dbReference type="NCBI Taxonomy" id="10036"/>
    <lineage>
        <taxon>Eukaryota</taxon>
        <taxon>Metazoa</taxon>
        <taxon>Chordata</taxon>
        <taxon>Craniata</taxon>
        <taxon>Vertebrata</taxon>
        <taxon>Euteleostomi</taxon>
        <taxon>Mammalia</taxon>
        <taxon>Eutheria</taxon>
        <taxon>Euarchontoglires</taxon>
        <taxon>Glires</taxon>
        <taxon>Rodentia</taxon>
        <taxon>Myomorpha</taxon>
        <taxon>Muroidea</taxon>
        <taxon>Cricetidae</taxon>
        <taxon>Cricetinae</taxon>
        <taxon>Mesocricetus</taxon>
    </lineage>
</organism>
<sequence>MADREMAAFGAAAFLRKSEKERLEAQTRPFDLKKDVFVPDDKEEFVKAKIVSREGGKVTAETENGKTVTVKEDQVMQQNPPKFDKIEDMAMLTFLHEPAVLYNLKDGYASWMIYTYSGLFCVTVNPYKWLPVYNAEVVAAYRGKKRSEAPAHIFSISDNAYQYMLTDRENQSILITGESGAGKTVNTKRVIQYFAVIAAIGDRSKKDQTPGKGTLEDQIIQANPALEAFGNAKTVRNDNSSRFGKFIRIHFGATGKLASADIETYLLEKSRVIFQLKAERDYHIFYQILSNKKPELLDMLLITNNPYDYAFIPQGETTVASIDDSEELMATDSAFDVLGFTSEEKNSIYKLTGAIMHFGNMKFKQKQREEQADRDGTEEEDKSAYLMGLNSADLLKGMCHPRVKVGNEYVTKGQNVQQVSYAIGALAKSVYEKMFNWMVTRINATLETKQPRQYFIGVLDIAGFEIFDFNSFEQLCINFTNEKLQQFFNHHMFVLEQEEYKKEGIEWTFIDFGMDLQACIDLIEKPMRIMSILEEECMFPKATDMTFKAKLYDNHLGKSNNFQKPRNVKGKQEAHFSLVHYAGTVDYNILGWLQKNKDPLNETVVGLYQKSSLKLLSNLFANYAGADAPVDKGKGKAKKGSSFQTVSVLHRENLNKLMTNLRSTHPHFVRCIIPNETKSPGVMDNPLVMHQLRCNGVLEGIRICRKGFPNRILYGDFRQRYRILNPAAIPEGQFIDSRKGAEKLLSSLDIDHNQYKFGHTKVFFKAGLLGLLEEMRDERLSRIITRIQAQSRGLLSRMEFKKLLERRDSLLVIQWNIRAFMGVKNWPWMKLYFKIKPLLKSAETEKEMATMKEEFGRVKDALEKSEARRKELEEKMVSLLQEKNDLQLQVQAEQDNLADAEERCDQLIKNKIQLEAKVKEMTERLEDEEEMNAELTAKKRKLEDECSELKRDIDDLELTLAKVEKDKHATENKVKNLTEEMAGLDEIIAKLTKEKKALQEAHQQALDDLQAEEDKVNTLTKSKVKLEQQVDDLEGSLEQEKKVRMDLERAKRKLEGDLKLTQESIMDLENDKQQLDEKLKKKDFELNALNARIEDEQALGSQLQKKLKELQARIEELEEELEAERTARAKVEKLRSDLSRELEEISERLEEAGGATSVQIEMNKKREAEFQKMRRDLEEATLQHEATAAALRKKHADSVAELGEQIDNLQRVKQKLEKEKSEFKLELDDVTSNMEQIIKAKANLEKMCRTLEDQMNEHRSKAEETQRSVNDLTSQRAKLQTENGELSRQLDEKEALISQLTRGKLTYTQQLEDLKRQLEEEVKAKNTLAHALQSARHDCDLLREQYEEETEAKAELQCVLSKANSEVAQWRTKYETDAIQRTEELEEAKKKLAQRLQDAEEAVEAVNAKCSSLEKTKHRLQNEIEDLMVDVERSNAAAAALDKKQRNFDKILAEWKQKYEESQSELESSQKEARSLSTELFKLKNAYEESLEHLETFKRENKNLQEEISDLTEQLGSTGKSIHELEKIRKQLEAEKMELQSALEEAEASLEHEEGNILRAQLEFNQIKAEIERKLAEKDEEMEQAKRNHLRVVDSLQTSLDAETRSRNEALRVKKKMEGDLNEMEIQLSHANRMAAEAQKQVKSLQSLLKDTQIQLDDAVRANDDLKENIAIVERRNNLLQAELEELRAVVEQTERSRKLAEQELIETSERVQLLHSQNTSLINQKKKMDADLSQLQTEVEEAVQECRNAEEKAKKAITDAAMMAEELKKEQDTSAHLERMKKNMEQTIKDLQHRLDEAEQIALKGGKKQLQKLEARVRELENELEAEQKRNAESVKGMRKSERRIKELTYQTEEDRKNLLRLQDLVDKLQLKVKAYKRQAEEAEEQANTNLSKFRKVQHELDEAEERADIAESQVNKLRAKSRDIGAKGLNEE</sequence>
<proteinExistence type="evidence at transcript level"/>
<dbReference type="EMBL" id="L12104">
    <property type="protein sequence ID" value="AAA62313.1"/>
    <property type="molecule type" value="Genomic_DNA"/>
</dbReference>
<dbReference type="EMBL" id="X07273">
    <property type="protein sequence ID" value="CAA30256.1"/>
    <property type="molecule type" value="mRNA"/>
</dbReference>
<dbReference type="PIR" id="I48153">
    <property type="entry name" value="I48153"/>
</dbReference>
<dbReference type="SMR" id="P13540"/>
<dbReference type="eggNOG" id="KOG0161">
    <property type="taxonomic scope" value="Eukaryota"/>
</dbReference>
<dbReference type="Proteomes" id="UP000189706">
    <property type="component" value="Unplaced"/>
</dbReference>
<dbReference type="GO" id="GO:0030016">
    <property type="term" value="C:myofibril"/>
    <property type="evidence" value="ECO:0000250"/>
    <property type="project" value="UniProtKB"/>
</dbReference>
<dbReference type="GO" id="GO:0032982">
    <property type="term" value="C:myosin filament"/>
    <property type="evidence" value="ECO:0000250"/>
    <property type="project" value="UniProtKB"/>
</dbReference>
<dbReference type="GO" id="GO:0016460">
    <property type="term" value="C:myosin II complex"/>
    <property type="evidence" value="ECO:0007669"/>
    <property type="project" value="TreeGrafter"/>
</dbReference>
<dbReference type="GO" id="GO:0030017">
    <property type="term" value="C:sarcomere"/>
    <property type="evidence" value="ECO:0000250"/>
    <property type="project" value="UniProtKB"/>
</dbReference>
<dbReference type="GO" id="GO:0051015">
    <property type="term" value="F:actin filament binding"/>
    <property type="evidence" value="ECO:0007669"/>
    <property type="project" value="InterPro"/>
</dbReference>
<dbReference type="GO" id="GO:0005524">
    <property type="term" value="F:ATP binding"/>
    <property type="evidence" value="ECO:0007669"/>
    <property type="project" value="UniProtKB-KW"/>
</dbReference>
<dbReference type="GO" id="GO:0005516">
    <property type="term" value="F:calmodulin binding"/>
    <property type="evidence" value="ECO:0007669"/>
    <property type="project" value="UniProtKB-KW"/>
</dbReference>
<dbReference type="GO" id="GO:0000146">
    <property type="term" value="F:microfilament motor activity"/>
    <property type="evidence" value="ECO:0007669"/>
    <property type="project" value="TreeGrafter"/>
</dbReference>
<dbReference type="GO" id="GO:0007512">
    <property type="term" value="P:adult heart development"/>
    <property type="evidence" value="ECO:0007669"/>
    <property type="project" value="TreeGrafter"/>
</dbReference>
<dbReference type="GO" id="GO:0060048">
    <property type="term" value="P:cardiac muscle contraction"/>
    <property type="evidence" value="ECO:0007669"/>
    <property type="project" value="TreeGrafter"/>
</dbReference>
<dbReference type="GO" id="GO:0030049">
    <property type="term" value="P:muscle filament sliding"/>
    <property type="evidence" value="ECO:0007669"/>
    <property type="project" value="TreeGrafter"/>
</dbReference>
<dbReference type="GO" id="GO:0045214">
    <property type="term" value="P:sarcomere organization"/>
    <property type="evidence" value="ECO:0007669"/>
    <property type="project" value="TreeGrafter"/>
</dbReference>
<dbReference type="CDD" id="cd14917">
    <property type="entry name" value="MYSc_Myh7"/>
    <property type="match status" value="1"/>
</dbReference>
<dbReference type="FunFam" id="1.10.10.820:FF:000001">
    <property type="entry name" value="Myosin heavy chain"/>
    <property type="match status" value="1"/>
</dbReference>
<dbReference type="FunFam" id="1.20.5.340:FF:000002">
    <property type="entry name" value="Myosin heavy chain"/>
    <property type="match status" value="1"/>
</dbReference>
<dbReference type="FunFam" id="1.20.5.340:FF:000003">
    <property type="entry name" value="Myosin heavy chain"/>
    <property type="match status" value="1"/>
</dbReference>
<dbReference type="FunFam" id="1.20.5.340:FF:000004">
    <property type="entry name" value="Myosin heavy chain"/>
    <property type="match status" value="1"/>
</dbReference>
<dbReference type="FunFam" id="1.20.5.340:FF:000006">
    <property type="entry name" value="Myosin heavy chain"/>
    <property type="match status" value="1"/>
</dbReference>
<dbReference type="FunFam" id="1.20.5.340:FF:000013">
    <property type="entry name" value="Myosin heavy chain"/>
    <property type="match status" value="1"/>
</dbReference>
<dbReference type="FunFam" id="1.20.5.370:FF:000001">
    <property type="entry name" value="Myosin heavy chain"/>
    <property type="match status" value="1"/>
</dbReference>
<dbReference type="FunFam" id="1.20.5.370:FF:000002">
    <property type="entry name" value="Myosin heavy chain"/>
    <property type="match status" value="1"/>
</dbReference>
<dbReference type="FunFam" id="1.20.5.370:FF:000003">
    <property type="entry name" value="Myosin heavy chain"/>
    <property type="match status" value="1"/>
</dbReference>
<dbReference type="FunFam" id="1.20.5.370:FF:000007">
    <property type="entry name" value="Myosin heavy chain"/>
    <property type="match status" value="1"/>
</dbReference>
<dbReference type="FunFam" id="1.20.5.370:FF:000008">
    <property type="entry name" value="Myosin heavy chain"/>
    <property type="match status" value="1"/>
</dbReference>
<dbReference type="FunFam" id="1.20.5.4820:FF:000001">
    <property type="entry name" value="Myosin heavy chain"/>
    <property type="match status" value="1"/>
</dbReference>
<dbReference type="FunFam" id="1.20.58.530:FF:000001">
    <property type="entry name" value="Myosin heavy chain"/>
    <property type="match status" value="1"/>
</dbReference>
<dbReference type="FunFam" id="2.30.30.360:FF:000001">
    <property type="entry name" value="Myosin heavy chain"/>
    <property type="match status" value="1"/>
</dbReference>
<dbReference type="FunFam" id="3.40.850.10:FF:000024">
    <property type="entry name" value="Myosin heavy chain, isoform J"/>
    <property type="match status" value="1"/>
</dbReference>
<dbReference type="FunFam" id="1.20.120.720:FF:000001">
    <property type="entry name" value="Myosin heavy chain, muscle"/>
    <property type="match status" value="1"/>
</dbReference>
<dbReference type="Gene3D" id="1.10.10.820">
    <property type="match status" value="1"/>
</dbReference>
<dbReference type="Gene3D" id="1.20.5.340">
    <property type="match status" value="5"/>
</dbReference>
<dbReference type="Gene3D" id="1.20.5.370">
    <property type="match status" value="5"/>
</dbReference>
<dbReference type="Gene3D" id="1.20.5.4820">
    <property type="match status" value="1"/>
</dbReference>
<dbReference type="Gene3D" id="1.20.58.530">
    <property type="match status" value="1"/>
</dbReference>
<dbReference type="Gene3D" id="6.10.250.2420">
    <property type="match status" value="1"/>
</dbReference>
<dbReference type="Gene3D" id="3.40.850.10">
    <property type="entry name" value="Kinesin motor domain"/>
    <property type="match status" value="1"/>
</dbReference>
<dbReference type="Gene3D" id="2.30.30.360">
    <property type="entry name" value="Myosin S1 fragment, N-terminal"/>
    <property type="match status" value="1"/>
</dbReference>
<dbReference type="Gene3D" id="1.20.120.720">
    <property type="entry name" value="Myosin VI head, motor domain, U50 subdomain"/>
    <property type="match status" value="1"/>
</dbReference>
<dbReference type="InterPro" id="IPR036961">
    <property type="entry name" value="Kinesin_motor_dom_sf"/>
</dbReference>
<dbReference type="InterPro" id="IPR001609">
    <property type="entry name" value="Myosin_head_motor_dom-like"/>
</dbReference>
<dbReference type="InterPro" id="IPR004009">
    <property type="entry name" value="Myosin_N"/>
</dbReference>
<dbReference type="InterPro" id="IPR008989">
    <property type="entry name" value="Myosin_S1_N"/>
</dbReference>
<dbReference type="InterPro" id="IPR002928">
    <property type="entry name" value="Myosin_tail"/>
</dbReference>
<dbReference type="InterPro" id="IPR027417">
    <property type="entry name" value="P-loop_NTPase"/>
</dbReference>
<dbReference type="InterPro" id="IPR014751">
    <property type="entry name" value="XRCC4-like_C"/>
</dbReference>
<dbReference type="PANTHER" id="PTHR45615">
    <property type="entry name" value="MYOSIN HEAVY CHAIN, NON-MUSCLE"/>
    <property type="match status" value="1"/>
</dbReference>
<dbReference type="PANTHER" id="PTHR45615:SF1">
    <property type="entry name" value="MYOSIN-7"/>
    <property type="match status" value="1"/>
</dbReference>
<dbReference type="Pfam" id="PF00063">
    <property type="entry name" value="Myosin_head"/>
    <property type="match status" value="1"/>
</dbReference>
<dbReference type="Pfam" id="PF02736">
    <property type="entry name" value="Myosin_N"/>
    <property type="match status" value="1"/>
</dbReference>
<dbReference type="Pfam" id="PF01576">
    <property type="entry name" value="Myosin_tail_1"/>
    <property type="match status" value="1"/>
</dbReference>
<dbReference type="PRINTS" id="PR00193">
    <property type="entry name" value="MYOSINHEAVY"/>
</dbReference>
<dbReference type="SMART" id="SM00242">
    <property type="entry name" value="MYSc"/>
    <property type="match status" value="1"/>
</dbReference>
<dbReference type="SUPFAM" id="SSF90257">
    <property type="entry name" value="Myosin rod fragments"/>
    <property type="match status" value="4"/>
</dbReference>
<dbReference type="SUPFAM" id="SSF52540">
    <property type="entry name" value="P-loop containing nucleoside triphosphate hydrolases"/>
    <property type="match status" value="1"/>
</dbReference>
<dbReference type="PROSITE" id="PS50096">
    <property type="entry name" value="IQ"/>
    <property type="match status" value="1"/>
</dbReference>
<dbReference type="PROSITE" id="PS51456">
    <property type="entry name" value="MYOSIN_MOTOR"/>
    <property type="match status" value="1"/>
</dbReference>
<dbReference type="PROSITE" id="PS51844">
    <property type="entry name" value="SH3_LIKE"/>
    <property type="match status" value="1"/>
</dbReference>
<accession>P13540</accession>
<accession>Q60540</accession>
<feature type="chain" id="PRO_0000123408" description="Myosin-7">
    <location>
        <begin position="1"/>
        <end position="1934"/>
    </location>
</feature>
<feature type="domain" description="Myosin N-terminal SH3-like" evidence="8">
    <location>
        <begin position="31"/>
        <end position="80"/>
    </location>
</feature>
<feature type="domain" description="Myosin motor" evidence="7">
    <location>
        <begin position="84"/>
        <end position="777"/>
    </location>
</feature>
<feature type="domain" description="IQ" evidence="6">
    <location>
        <begin position="780"/>
        <end position="809"/>
    </location>
</feature>
<feature type="region of interest" description="Actin-binding">
    <location>
        <begin position="654"/>
        <end position="676"/>
    </location>
</feature>
<feature type="region of interest" description="Actin-binding">
    <location>
        <begin position="756"/>
        <end position="770"/>
    </location>
</feature>
<feature type="region of interest" description="Disordered" evidence="9">
    <location>
        <begin position="1914"/>
        <end position="1934"/>
    </location>
</feature>
<feature type="coiled-coil region" evidence="5">
    <location>
        <begin position="839"/>
        <end position="1934"/>
    </location>
</feature>
<feature type="compositionally biased region" description="Basic and acidic residues" evidence="9">
    <location>
        <begin position="1922"/>
        <end position="1934"/>
    </location>
</feature>
<feature type="binding site">
    <location>
        <begin position="177"/>
        <end position="184"/>
    </location>
    <ligand>
        <name>ATP</name>
        <dbReference type="ChEBI" id="CHEBI:30616"/>
    </ligand>
</feature>
<feature type="modified residue" description="N6,N6,N6-trimethyllysine" evidence="5">
    <location>
        <position position="128"/>
    </location>
</feature>
<feature type="modified residue" description="Phosphothreonine" evidence="1">
    <location>
        <position position="377"/>
    </location>
</feature>
<feature type="modified residue" description="Phosphoserine" evidence="1">
    <location>
        <position position="1136"/>
    </location>
</feature>
<feature type="modified residue" description="Phosphoserine" evidence="4">
    <location>
        <position position="1268"/>
    </location>
</feature>
<feature type="modified residue" description="Phosphothreonine" evidence="1">
    <location>
        <position position="1281"/>
    </location>
</feature>
<feature type="modified residue" description="Phosphotyrosine" evidence="1">
    <location>
        <position position="1307"/>
    </location>
</feature>
<feature type="modified residue" description="Phosphothreonine" evidence="1">
    <location>
        <position position="1308"/>
    </location>
</feature>
<feature type="modified residue" description="Phosphoserine" evidence="2">
    <location>
        <position position="1509"/>
    </location>
</feature>
<feature type="modified residue" description="Phosphothreonine" evidence="1">
    <location>
        <position position="1512"/>
    </location>
</feature>
<feature type="sequence conflict" description="In Ref. 2; CAA30256." evidence="10" ref="2">
    <original>D</original>
    <variation>E</variation>
    <location>
        <position position="966"/>
    </location>
</feature>
<feature type="sequence conflict" description="In Ref. 2; CAA30256." evidence="10" ref="2">
    <original>T</original>
    <variation>TE</variation>
    <location>
        <position position="978"/>
    </location>
</feature>
<feature type="sequence conflict" description="In Ref. 2; CAA30256." evidence="10" ref="2">
    <original>E</original>
    <variation>Q</variation>
    <location>
        <position position="986"/>
    </location>
</feature>
<feature type="sequence conflict" description="In Ref. 2; CAA30256." evidence="10" ref="2">
    <original>DLQAEED</original>
    <variation>ALEARKT</variation>
    <location>
        <begin position="1008"/>
        <end position="1014"/>
    </location>
</feature>
<feature type="sequence conflict" description="In Ref. 2; CAA30256." evidence="10" ref="2">
    <original>D</original>
    <variation>Y</variation>
    <location>
        <position position="1057"/>
    </location>
</feature>
<feature type="sequence conflict" description="In Ref. 2; CAA30256." evidence="10" ref="2">
    <original>L</original>
    <variation>V</variation>
    <location>
        <position position="1060"/>
    </location>
</feature>
<feature type="sequence conflict" description="In Ref. 2; CAA30256." evidence="10" ref="2">
    <original>D</original>
    <variation>N</variation>
    <location>
        <position position="1095"/>
    </location>
</feature>
<feature type="sequence conflict" description="In Ref. 2; CAA30256." evidence="10" ref="2">
    <original>E</original>
    <variation>D</variation>
    <location>
        <position position="1217"/>
    </location>
</feature>
<feature type="sequence conflict" description="In Ref. 2; CAA30256." evidence="10" ref="2">
    <original>D</original>
    <variation>N</variation>
    <location>
        <position position="1271"/>
    </location>
</feature>
<feature type="sequence conflict" description="In Ref. 2; CAA30256." evidence="10" ref="2">
    <original>T</original>
    <variation>A</variation>
    <location>
        <position position="1327"/>
    </location>
</feature>
<feature type="sequence conflict" description="In Ref. 2; CAA30256." evidence="10" ref="2">
    <original>C</original>
    <variation>R</variation>
    <location>
        <position position="1358"/>
    </location>
</feature>
<feature type="sequence conflict" description="In Ref. 2; CAA30256." evidence="10" ref="2">
    <original>L</original>
    <variation>V</variation>
    <location>
        <position position="1504"/>
    </location>
</feature>
<feature type="sequence conflict" description="In Ref. 2; CAA30256." evidence="10" ref="2">
    <original>M</original>
    <variation>L</variation>
    <location>
        <position position="1537"/>
    </location>
</feature>
<feature type="sequence conflict" description="In Ref. 2; CAA30256." evidence="10" ref="2">
    <original>N</original>
    <variation>K</variation>
    <location>
        <position position="1556"/>
    </location>
</feature>
<protein>
    <recommendedName>
        <fullName>Myosin-7</fullName>
    </recommendedName>
    <alternativeName>
        <fullName>Myosin heavy chain 7</fullName>
    </alternativeName>
    <alternativeName>
        <fullName>Myosin heavy chain slow isoform</fullName>
        <shortName>MyHC-slow</shortName>
    </alternativeName>
    <alternativeName>
        <fullName>Myosin heavy chain, cardiac muscle beta isoform</fullName>
        <shortName>MyHC-beta</shortName>
    </alternativeName>
</protein>
<gene>
    <name type="primary">MYH7</name>
</gene>